<evidence type="ECO:0000250" key="1">
    <source>
        <dbReference type="UniProtKB" id="Q9I0Q8"/>
    </source>
</evidence>
<evidence type="ECO:0000255" key="2">
    <source>
        <dbReference type="PROSITE-ProRule" id="PRU00532"/>
    </source>
</evidence>
<evidence type="ECO:0000269" key="3">
    <source>
    </source>
</evidence>
<evidence type="ECO:0000303" key="4">
    <source>
    </source>
</evidence>
<evidence type="ECO:0000305" key="5"/>
<evidence type="ECO:0007829" key="6">
    <source>
        <dbReference type="PDB" id="5JPH"/>
    </source>
</evidence>
<organism>
    <name type="scientific">Staphylococcus aureus (strain COL)</name>
    <dbReference type="NCBI Taxonomy" id="93062"/>
    <lineage>
        <taxon>Bacteria</taxon>
        <taxon>Bacillati</taxon>
        <taxon>Bacillota</taxon>
        <taxon>Bacilli</taxon>
        <taxon>Bacillales</taxon>
        <taxon>Staphylococcaceae</taxon>
        <taxon>Staphylococcus</taxon>
    </lineage>
</organism>
<protein>
    <recommendedName>
        <fullName evidence="4">Acetyltransferase SACOL1063</fullName>
        <ecNumber>2.3.1.-</ecNumber>
    </recommendedName>
    <alternativeName>
        <fullName evidence="4">GCN5-related N-acetyltransferase</fullName>
        <shortName evidence="4">GNAT</shortName>
    </alternativeName>
</protein>
<reference key="1">
    <citation type="journal article" date="2005" name="J. Bacteriol.">
        <title>Insights on evolution of virulence and resistance from the complete genome analysis of an early methicillin-resistant Staphylococcus aureus strain and a biofilm-producing methicillin-resistant Staphylococcus epidermidis strain.</title>
        <authorList>
            <person name="Gill S.R."/>
            <person name="Fouts D.E."/>
            <person name="Archer G.L."/>
            <person name="Mongodin E.F."/>
            <person name="DeBoy R.T."/>
            <person name="Ravel J."/>
            <person name="Paulsen I.T."/>
            <person name="Kolonay J.F."/>
            <person name="Brinkac L.M."/>
            <person name="Beanan M.J."/>
            <person name="Dodson R.J."/>
            <person name="Daugherty S.C."/>
            <person name="Madupu R."/>
            <person name="Angiuoli S.V."/>
            <person name="Durkin A.S."/>
            <person name="Haft D.H."/>
            <person name="Vamathevan J.J."/>
            <person name="Khouri H."/>
            <person name="Utterback T.R."/>
            <person name="Lee C."/>
            <person name="Dimitrov G."/>
            <person name="Jiang L."/>
            <person name="Qin H."/>
            <person name="Weidman J."/>
            <person name="Tran K."/>
            <person name="Kang K.H."/>
            <person name="Hance I.R."/>
            <person name="Nelson K.E."/>
            <person name="Fraser C.M."/>
        </authorList>
    </citation>
    <scope>NUCLEOTIDE SEQUENCE [LARGE SCALE GENOMIC DNA]</scope>
    <source>
        <strain>COL</strain>
    </source>
</reference>
<reference key="2">
    <citation type="journal article" date="2013" name="Protein Sci.">
        <title>Broad-substrate screen as a tool to identify substrates for bacterial Gcn5-related N-acetyltransferases with unknown substrate specificity.</title>
        <authorList>
            <person name="Kuhn M.L."/>
            <person name="Majorek K.A."/>
            <person name="Minor W."/>
            <person name="Anderson W.F."/>
        </authorList>
    </citation>
    <scope>FUNCTION</scope>
    <scope>SUBSTRATE SPECIFICITY</scope>
    <source>
        <strain>COL</strain>
    </source>
</reference>
<comment type="function">
    <text evidence="3">Catalyzes the transfer of an acetyl group from acetyl coenzyme A (AcCoA) to an acceptor substrate and releases both CoA and the acetylated product. It displays the highest activity for L-threonine. It can also use L-tryptophan, and to a much lesser extent L-tyrosine.</text>
</comment>
<comment type="similarity">
    <text evidence="5">Belongs to the UPF0039 (ElaA) family.</text>
</comment>
<gene>
    <name type="ordered locus">SACOL1063</name>
</gene>
<sequence>MFSKVNNQKMLEDCFYIRKKVFVEEQGVPEESEIDEYESESIHLIGYDNGQPVATARIRPINETTVKIERVAVMKSHRGQGMGRMLMQAVESLAKDEGFYVATMNAQCHAIPFYESLNFKMRGNIFLEEGIEHIEMTKKLTSLN</sequence>
<dbReference type="EC" id="2.3.1.-"/>
<dbReference type="EMBL" id="CP000046">
    <property type="protein sequence ID" value="AAW36527.1"/>
    <property type="molecule type" value="Genomic_DNA"/>
</dbReference>
<dbReference type="RefSeq" id="WP_000491986.1">
    <property type="nucleotide sequence ID" value="NZ_JBGOFO010000002.1"/>
</dbReference>
<dbReference type="PDB" id="5JPH">
    <property type="method" value="X-ray"/>
    <property type="resolution" value="1.46 A"/>
    <property type="chains" value="A/B/C=1-141"/>
</dbReference>
<dbReference type="PDB" id="5JQ4">
    <property type="method" value="X-ray"/>
    <property type="resolution" value="1.80 A"/>
    <property type="chains" value="A/B=1-143"/>
</dbReference>
<dbReference type="PDBsum" id="5JPH"/>
<dbReference type="PDBsum" id="5JQ4"/>
<dbReference type="SMR" id="Q5HH30"/>
<dbReference type="KEGG" id="sac:SACOL1063"/>
<dbReference type="HOGENOM" id="CLU_056607_6_2_9"/>
<dbReference type="Proteomes" id="UP000000530">
    <property type="component" value="Chromosome"/>
</dbReference>
<dbReference type="GO" id="GO:0016747">
    <property type="term" value="F:acyltransferase activity, transferring groups other than amino-acyl groups"/>
    <property type="evidence" value="ECO:0000314"/>
    <property type="project" value="UniProtKB"/>
</dbReference>
<dbReference type="GO" id="GO:0004343">
    <property type="term" value="F:glucosamine 6-phosphate N-acetyltransferase activity"/>
    <property type="evidence" value="ECO:0007669"/>
    <property type="project" value="TreeGrafter"/>
</dbReference>
<dbReference type="CDD" id="cd04301">
    <property type="entry name" value="NAT_SF"/>
    <property type="match status" value="1"/>
</dbReference>
<dbReference type="FunFam" id="3.40.630.30:FF:000131">
    <property type="entry name" value="Acetyltransferase, GNAT family"/>
    <property type="match status" value="1"/>
</dbReference>
<dbReference type="Gene3D" id="3.40.630.30">
    <property type="match status" value="1"/>
</dbReference>
<dbReference type="InterPro" id="IPR016181">
    <property type="entry name" value="Acyl_CoA_acyltransferase"/>
</dbReference>
<dbReference type="InterPro" id="IPR000182">
    <property type="entry name" value="GNAT_dom"/>
</dbReference>
<dbReference type="InterPro" id="IPR039143">
    <property type="entry name" value="GNPNAT1-like"/>
</dbReference>
<dbReference type="PANTHER" id="PTHR13355">
    <property type="entry name" value="GLUCOSAMINE 6-PHOSPHATE N-ACETYLTRANSFERASE"/>
    <property type="match status" value="1"/>
</dbReference>
<dbReference type="PANTHER" id="PTHR13355:SF11">
    <property type="entry name" value="GLUCOSAMINE 6-PHOSPHATE N-ACETYLTRANSFERASE"/>
    <property type="match status" value="1"/>
</dbReference>
<dbReference type="Pfam" id="PF00583">
    <property type="entry name" value="Acetyltransf_1"/>
    <property type="match status" value="1"/>
</dbReference>
<dbReference type="SUPFAM" id="SSF55729">
    <property type="entry name" value="Acyl-CoA N-acyltransferases (Nat)"/>
    <property type="match status" value="1"/>
</dbReference>
<dbReference type="PROSITE" id="PS51186">
    <property type="entry name" value="GNAT"/>
    <property type="match status" value="1"/>
</dbReference>
<proteinExistence type="evidence at protein level"/>
<name>ATSE_STAAC</name>
<accession>Q5HH30</accession>
<feature type="chain" id="PRO_0000201923" description="Acetyltransferase SACOL1063">
    <location>
        <begin position="1"/>
        <end position="144"/>
    </location>
</feature>
<feature type="domain" description="N-acetyltransferase" evidence="2">
    <location>
        <begin position="1"/>
        <end position="141"/>
    </location>
</feature>
<feature type="binding site" evidence="1">
    <location>
        <begin position="71"/>
        <end position="73"/>
    </location>
    <ligand>
        <name>CoA</name>
        <dbReference type="ChEBI" id="CHEBI:57287"/>
    </ligand>
</feature>
<feature type="binding site" evidence="1">
    <location>
        <position position="79"/>
    </location>
    <ligand>
        <name>CoA</name>
        <dbReference type="ChEBI" id="CHEBI:57287"/>
    </ligand>
</feature>
<feature type="binding site" evidence="1">
    <location>
        <begin position="112"/>
        <end position="114"/>
    </location>
    <ligand>
        <name>CoA</name>
        <dbReference type="ChEBI" id="CHEBI:57287"/>
    </ligand>
</feature>
<feature type="strand" evidence="6">
    <location>
        <begin position="2"/>
        <end position="4"/>
    </location>
</feature>
<feature type="helix" evidence="6">
    <location>
        <begin position="8"/>
        <end position="22"/>
    </location>
</feature>
<feature type="turn" evidence="6">
    <location>
        <begin position="23"/>
        <end position="26"/>
    </location>
</feature>
<feature type="helix" evidence="6">
    <location>
        <begin position="30"/>
        <end position="33"/>
    </location>
</feature>
<feature type="turn" evidence="6">
    <location>
        <begin position="36"/>
        <end position="40"/>
    </location>
</feature>
<feature type="strand" evidence="6">
    <location>
        <begin position="41"/>
        <end position="48"/>
    </location>
</feature>
<feature type="strand" evidence="6">
    <location>
        <begin position="51"/>
        <end position="60"/>
    </location>
</feature>
<feature type="strand" evidence="6">
    <location>
        <begin position="62"/>
        <end position="73"/>
    </location>
</feature>
<feature type="helix" evidence="6">
    <location>
        <begin position="75"/>
        <end position="77"/>
    </location>
</feature>
<feature type="helix" evidence="6">
    <location>
        <begin position="82"/>
        <end position="96"/>
    </location>
</feature>
<feature type="strand" evidence="6">
    <location>
        <begin position="101"/>
        <end position="107"/>
    </location>
</feature>
<feature type="helix" evidence="6">
    <location>
        <begin position="108"/>
        <end position="110"/>
    </location>
</feature>
<feature type="helix" evidence="6">
    <location>
        <begin position="111"/>
        <end position="116"/>
    </location>
</feature>
<feature type="strand" evidence="6">
    <location>
        <begin position="120"/>
        <end position="128"/>
    </location>
</feature>
<feature type="strand" evidence="6">
    <location>
        <begin position="131"/>
        <end position="139"/>
    </location>
</feature>
<keyword id="KW-0002">3D-structure</keyword>
<keyword id="KW-0012">Acyltransferase</keyword>
<keyword id="KW-0808">Transferase</keyword>